<keyword id="KW-0150">Chloroplast</keyword>
<keyword id="KW-0507">mRNA processing</keyword>
<keyword id="KW-0934">Plastid</keyword>
<keyword id="KW-0694">RNA-binding</keyword>
<keyword id="KW-0819">tRNA processing</keyword>
<proteinExistence type="inferred from homology"/>
<sequence length="512" mass="60607">MEELKGYLEKSRSKQQHFLYPLLFQEYIYALAHDHGLNVNGSFFYEPAEISGYDKKFSSLLAKRLITRMYQQNYLINSVNDSNQNRFVGHNRNFYSQMISEGFAVIVEIXFSLRLVSSLEEKKEIPKSQNLRSIHSIFPFFEDKLSHLNCVSDILIPYPVHLEILVQILQCWIQDVPSLHLLRFFFHEYHNWNNLITPKKSNYYGFSKENPRLFLFLYNSYVVECESILVFLRKQSSYLRSTSSGTFLERAHFYEKIEQHLVVLCCNDFQKTLWLFKDPFMHYVRYQGKSILASKGTHLLMKKWKSYFVNFWQCHFHFWSQPCRIHINQFSNFSFYFLGYLSSVPINPSAVKSQMLENSFLVDTATKKFETIVPIIPMIGALSKAKFCNVSGNPISKPVWADLSDSDIIDRFGRTCRNLSHYYSGSSKKQSLYRIKYILRLSCARTLARKHKSTVRAFLQRLGSEFLEEFFTEEEKALSLILPRISYPLHKLYRERIWYLDIIRINDLVNHL</sequence>
<accession>Q8MED5</accession>
<feature type="chain" id="PRO_0000143231" description="Maturase K">
    <location>
        <begin position="1"/>
        <end position="512"/>
    </location>
</feature>
<dbReference type="EMBL" id="AF387421">
    <property type="protein sequence ID" value="AAM46596.1"/>
    <property type="molecule type" value="Genomic_DNA"/>
</dbReference>
<dbReference type="GO" id="GO:0009507">
    <property type="term" value="C:chloroplast"/>
    <property type="evidence" value="ECO:0007669"/>
    <property type="project" value="UniProtKB-SubCell"/>
</dbReference>
<dbReference type="GO" id="GO:0003723">
    <property type="term" value="F:RNA binding"/>
    <property type="evidence" value="ECO:0007669"/>
    <property type="project" value="UniProtKB-KW"/>
</dbReference>
<dbReference type="GO" id="GO:0006397">
    <property type="term" value="P:mRNA processing"/>
    <property type="evidence" value="ECO:0007669"/>
    <property type="project" value="UniProtKB-KW"/>
</dbReference>
<dbReference type="GO" id="GO:0008380">
    <property type="term" value="P:RNA splicing"/>
    <property type="evidence" value="ECO:0007669"/>
    <property type="project" value="UniProtKB-UniRule"/>
</dbReference>
<dbReference type="GO" id="GO:0008033">
    <property type="term" value="P:tRNA processing"/>
    <property type="evidence" value="ECO:0007669"/>
    <property type="project" value="UniProtKB-KW"/>
</dbReference>
<dbReference type="HAMAP" id="MF_01390">
    <property type="entry name" value="MatK"/>
    <property type="match status" value="1"/>
</dbReference>
<dbReference type="InterPro" id="IPR024937">
    <property type="entry name" value="Domain_X"/>
</dbReference>
<dbReference type="InterPro" id="IPR002866">
    <property type="entry name" value="Maturase_MatK"/>
</dbReference>
<dbReference type="InterPro" id="IPR024942">
    <property type="entry name" value="Maturase_MatK_N"/>
</dbReference>
<dbReference type="PANTHER" id="PTHR34811">
    <property type="entry name" value="MATURASE K"/>
    <property type="match status" value="1"/>
</dbReference>
<dbReference type="PANTHER" id="PTHR34811:SF1">
    <property type="entry name" value="MATURASE K"/>
    <property type="match status" value="1"/>
</dbReference>
<dbReference type="Pfam" id="PF01348">
    <property type="entry name" value="Intron_maturas2"/>
    <property type="match status" value="1"/>
</dbReference>
<dbReference type="Pfam" id="PF01824">
    <property type="entry name" value="MatK_N"/>
    <property type="match status" value="1"/>
</dbReference>
<comment type="function">
    <text evidence="1">Usually encoded in the trnK tRNA gene intron. Probably assists in splicing its own and other chloroplast group II introns.</text>
</comment>
<comment type="subcellular location">
    <subcellularLocation>
        <location>Plastid</location>
        <location>Chloroplast</location>
    </subcellularLocation>
</comment>
<comment type="similarity">
    <text evidence="1">Belongs to the intron maturase 2 family. MatK subfamily.</text>
</comment>
<name>MATK_AMOTI</name>
<geneLocation type="chloroplast"/>
<organism>
    <name type="scientific">Amorphophallus titanum</name>
    <name type="common">Titan arum</name>
    <name type="synonym">Conophallus titanum</name>
    <dbReference type="NCBI Taxonomy" id="175755"/>
    <lineage>
        <taxon>Eukaryota</taxon>
        <taxon>Viridiplantae</taxon>
        <taxon>Streptophyta</taxon>
        <taxon>Embryophyta</taxon>
        <taxon>Tracheophyta</taxon>
        <taxon>Spermatophyta</taxon>
        <taxon>Magnoliopsida</taxon>
        <taxon>Liliopsida</taxon>
        <taxon>Araceae</taxon>
        <taxon>Aroideae</taxon>
        <taxon>Thomsonieae</taxon>
        <taxon>Amorphophallus</taxon>
    </lineage>
</organism>
<evidence type="ECO:0000255" key="1">
    <source>
        <dbReference type="HAMAP-Rule" id="MF_01390"/>
    </source>
</evidence>
<reference key="1">
    <citation type="journal article" date="2002" name="Syst. Bot.">
        <title>Phylogeny of the tribe Thomsonieae (Araceae) based on chloroplast matK and trnL intron sequences.</title>
        <authorList>
            <person name="Grob G.B.J."/>
            <person name="Gravendeel B."/>
            <person name="Eurlings M.C.M."/>
            <person name="Hetterscheid W.L.A."/>
        </authorList>
        <dbReference type="AGRICOLA" id="IND23294517"/>
    </citation>
    <scope>NUCLEOTIDE SEQUENCE [GENOMIC DNA]</scope>
</reference>
<protein>
    <recommendedName>
        <fullName evidence="1">Maturase K</fullName>
    </recommendedName>
    <alternativeName>
        <fullName evidence="1">Intron maturase</fullName>
    </alternativeName>
</protein>
<gene>
    <name evidence="1" type="primary">matK</name>
</gene>